<protein>
    <recommendedName>
        <fullName evidence="1">ATP synthase gamma chain</fullName>
    </recommendedName>
    <alternativeName>
        <fullName evidence="1">ATP synthase F1 sector gamma subunit</fullName>
    </alternativeName>
    <alternativeName>
        <fullName evidence="1">F-ATPase gamma subunit</fullName>
    </alternativeName>
</protein>
<keyword id="KW-0066">ATP synthesis</keyword>
<keyword id="KW-0997">Cell inner membrane</keyword>
<keyword id="KW-1003">Cell membrane</keyword>
<keyword id="KW-0139">CF(1)</keyword>
<keyword id="KW-0375">Hydrogen ion transport</keyword>
<keyword id="KW-0406">Ion transport</keyword>
<keyword id="KW-0472">Membrane</keyword>
<keyword id="KW-0813">Transport</keyword>
<gene>
    <name evidence="1" type="primary">atpG</name>
    <name type="ordered locus">ABAYE3717</name>
</gene>
<comment type="function">
    <text evidence="1">Produces ATP from ADP in the presence of a proton gradient across the membrane. The gamma chain is believed to be important in regulating ATPase activity and the flow of protons through the CF(0) complex.</text>
</comment>
<comment type="subunit">
    <text evidence="1">F-type ATPases have 2 components, CF(1) - the catalytic core - and CF(0) - the membrane proton channel. CF(1) has five subunits: alpha(3), beta(3), gamma(1), delta(1), epsilon(1). CF(0) has three main subunits: a, b and c.</text>
</comment>
<comment type="subcellular location">
    <subcellularLocation>
        <location evidence="1">Cell inner membrane</location>
        <topology evidence="1">Peripheral membrane protein</topology>
    </subcellularLocation>
</comment>
<comment type="similarity">
    <text evidence="1">Belongs to the ATPase gamma chain family.</text>
</comment>
<evidence type="ECO:0000255" key="1">
    <source>
        <dbReference type="HAMAP-Rule" id="MF_00815"/>
    </source>
</evidence>
<name>ATPG_ACIBY</name>
<organism>
    <name type="scientific">Acinetobacter baumannii (strain AYE)</name>
    <dbReference type="NCBI Taxonomy" id="509173"/>
    <lineage>
        <taxon>Bacteria</taxon>
        <taxon>Pseudomonadati</taxon>
        <taxon>Pseudomonadota</taxon>
        <taxon>Gammaproteobacteria</taxon>
        <taxon>Moraxellales</taxon>
        <taxon>Moraxellaceae</taxon>
        <taxon>Acinetobacter</taxon>
        <taxon>Acinetobacter calcoaceticus/baumannii complex</taxon>
    </lineage>
</organism>
<feature type="chain" id="PRO_1000134097" description="ATP synthase gamma chain">
    <location>
        <begin position="1"/>
        <end position="289"/>
    </location>
</feature>
<proteinExistence type="inferred from homology"/>
<reference key="1">
    <citation type="journal article" date="2008" name="PLoS ONE">
        <title>Comparative analysis of Acinetobacters: three genomes for three lifestyles.</title>
        <authorList>
            <person name="Vallenet D."/>
            <person name="Nordmann P."/>
            <person name="Barbe V."/>
            <person name="Poirel L."/>
            <person name="Mangenot S."/>
            <person name="Bataille E."/>
            <person name="Dossat C."/>
            <person name="Gas S."/>
            <person name="Kreimeyer A."/>
            <person name="Lenoble P."/>
            <person name="Oztas S."/>
            <person name="Poulain J."/>
            <person name="Segurens B."/>
            <person name="Robert C."/>
            <person name="Abergel C."/>
            <person name="Claverie J.-M."/>
            <person name="Raoult D."/>
            <person name="Medigue C."/>
            <person name="Weissenbach J."/>
            <person name="Cruveiller S."/>
        </authorList>
    </citation>
    <scope>NUCLEOTIDE SEQUENCE [LARGE SCALE GENOMIC DNA]</scope>
    <source>
        <strain>AYE</strain>
    </source>
</reference>
<sequence length="289" mass="32096">MANLKEIRAKVASIKSTQKITRAMQMVAASKMRRAQERMAQGRPYADNMRRVIAHLVQANPEYKHRYMVDRPVKRVGYIIVSSDRGLAGGLNINLFKKVVQHVKAQQEQSIEVQFALIGQKAVSFFKNYGGKVLGATTQIGDAPSLEQLTGSVQVMLDAFDKGELDRIYLVSNGFVNAMTQKPKVEQLVPLAPAEEGDDLNRTYGWDYIYEPEAEELLNGLLVRYIESMVYQGVIENVACEQSARMVAMKAATDNAGQLIKDLQLIYNKLRQAAITQEISEIVGGAAAV</sequence>
<accession>B0VBP4</accession>
<dbReference type="EMBL" id="CU459141">
    <property type="protein sequence ID" value="CAM88481.1"/>
    <property type="molecule type" value="Genomic_DNA"/>
</dbReference>
<dbReference type="RefSeq" id="WP_001284971.1">
    <property type="nucleotide sequence ID" value="NZ_JBDGFB010000006.1"/>
</dbReference>
<dbReference type="SMR" id="B0VBP4"/>
<dbReference type="EnsemblBacteria" id="CAM88481">
    <property type="protein sequence ID" value="CAM88481"/>
    <property type="gene ID" value="ABAYE3717"/>
</dbReference>
<dbReference type="GeneID" id="92892166"/>
<dbReference type="KEGG" id="aby:ABAYE3717"/>
<dbReference type="HOGENOM" id="CLU_050669_0_1_6"/>
<dbReference type="GO" id="GO:0005886">
    <property type="term" value="C:plasma membrane"/>
    <property type="evidence" value="ECO:0007669"/>
    <property type="project" value="UniProtKB-SubCell"/>
</dbReference>
<dbReference type="GO" id="GO:0045259">
    <property type="term" value="C:proton-transporting ATP synthase complex"/>
    <property type="evidence" value="ECO:0007669"/>
    <property type="project" value="UniProtKB-KW"/>
</dbReference>
<dbReference type="GO" id="GO:0005524">
    <property type="term" value="F:ATP binding"/>
    <property type="evidence" value="ECO:0007669"/>
    <property type="project" value="UniProtKB-UniRule"/>
</dbReference>
<dbReference type="GO" id="GO:0046933">
    <property type="term" value="F:proton-transporting ATP synthase activity, rotational mechanism"/>
    <property type="evidence" value="ECO:0007669"/>
    <property type="project" value="UniProtKB-UniRule"/>
</dbReference>
<dbReference type="GO" id="GO:0042777">
    <property type="term" value="P:proton motive force-driven plasma membrane ATP synthesis"/>
    <property type="evidence" value="ECO:0007669"/>
    <property type="project" value="UniProtKB-UniRule"/>
</dbReference>
<dbReference type="CDD" id="cd12151">
    <property type="entry name" value="F1-ATPase_gamma"/>
    <property type="match status" value="1"/>
</dbReference>
<dbReference type="FunFam" id="1.10.287.80:FF:000005">
    <property type="entry name" value="ATP synthase gamma chain"/>
    <property type="match status" value="1"/>
</dbReference>
<dbReference type="Gene3D" id="3.40.1380.10">
    <property type="match status" value="1"/>
</dbReference>
<dbReference type="Gene3D" id="1.10.287.80">
    <property type="entry name" value="ATP synthase, gamma subunit, helix hairpin domain"/>
    <property type="match status" value="1"/>
</dbReference>
<dbReference type="HAMAP" id="MF_00815">
    <property type="entry name" value="ATP_synth_gamma_bact"/>
    <property type="match status" value="1"/>
</dbReference>
<dbReference type="InterPro" id="IPR035968">
    <property type="entry name" value="ATP_synth_F1_ATPase_gsu"/>
</dbReference>
<dbReference type="InterPro" id="IPR000131">
    <property type="entry name" value="ATP_synth_F1_gsu"/>
</dbReference>
<dbReference type="InterPro" id="IPR023632">
    <property type="entry name" value="ATP_synth_F1_gsu_CS"/>
</dbReference>
<dbReference type="NCBIfam" id="TIGR01146">
    <property type="entry name" value="ATPsyn_F1gamma"/>
    <property type="match status" value="1"/>
</dbReference>
<dbReference type="NCBIfam" id="NF004144">
    <property type="entry name" value="PRK05621.1-1"/>
    <property type="match status" value="1"/>
</dbReference>
<dbReference type="PANTHER" id="PTHR11693">
    <property type="entry name" value="ATP SYNTHASE GAMMA CHAIN"/>
    <property type="match status" value="1"/>
</dbReference>
<dbReference type="PANTHER" id="PTHR11693:SF22">
    <property type="entry name" value="ATP SYNTHASE SUBUNIT GAMMA, MITOCHONDRIAL"/>
    <property type="match status" value="1"/>
</dbReference>
<dbReference type="Pfam" id="PF00231">
    <property type="entry name" value="ATP-synt"/>
    <property type="match status" value="1"/>
</dbReference>
<dbReference type="PRINTS" id="PR00126">
    <property type="entry name" value="ATPASEGAMMA"/>
</dbReference>
<dbReference type="SUPFAM" id="SSF52943">
    <property type="entry name" value="ATP synthase (F1-ATPase), gamma subunit"/>
    <property type="match status" value="1"/>
</dbReference>
<dbReference type="PROSITE" id="PS00153">
    <property type="entry name" value="ATPASE_GAMMA"/>
    <property type="match status" value="1"/>
</dbReference>